<feature type="chain" id="PRO_0000254511" description="ATP synthase subunit beta, chloroplastic">
    <location>
        <begin position="1"/>
        <end position="498"/>
    </location>
</feature>
<feature type="binding site" evidence="1">
    <location>
        <begin position="172"/>
        <end position="179"/>
    </location>
    <ligand>
        <name>ATP</name>
        <dbReference type="ChEBI" id="CHEBI:30616"/>
    </ligand>
</feature>
<reference key="1">
    <citation type="book" date="2000" name="MONOCOTS: SYSTEMATICS AND EVOLUTION">
        <title>Higher-level systematics of the monocotyledons: an assessment of current knowledge and a new classification.</title>
        <editorList>
            <person name="Wilson K.L."/>
            <person name="Morrison D.A."/>
        </editorList>
        <authorList>
            <person name="Chase M.W."/>
        </authorList>
    </citation>
    <scope>NUCLEOTIDE SEQUENCE [GENOMIC DNA]</scope>
</reference>
<proteinExistence type="inferred from homology"/>
<keyword id="KW-0066">ATP synthesis</keyword>
<keyword id="KW-0067">ATP-binding</keyword>
<keyword id="KW-0139">CF(1)</keyword>
<keyword id="KW-0150">Chloroplast</keyword>
<keyword id="KW-0375">Hydrogen ion transport</keyword>
<keyword id="KW-0406">Ion transport</keyword>
<keyword id="KW-0472">Membrane</keyword>
<keyword id="KW-0547">Nucleotide-binding</keyword>
<keyword id="KW-0934">Plastid</keyword>
<keyword id="KW-0793">Thylakoid</keyword>
<keyword id="KW-1278">Translocase</keyword>
<keyword id="KW-0813">Transport</keyword>
<organism>
    <name type="scientific">Phormium tenax</name>
    <name type="common">New Zealand flax</name>
    <dbReference type="NCBI Taxonomy" id="51475"/>
    <lineage>
        <taxon>Eukaryota</taxon>
        <taxon>Viridiplantae</taxon>
        <taxon>Streptophyta</taxon>
        <taxon>Embryophyta</taxon>
        <taxon>Tracheophyta</taxon>
        <taxon>Spermatophyta</taxon>
        <taxon>Magnoliopsida</taxon>
        <taxon>Liliopsida</taxon>
        <taxon>Asparagales</taxon>
        <taxon>Asphodelaceae</taxon>
        <taxon>Hemerocallidoideae</taxon>
        <taxon>Phormium</taxon>
    </lineage>
</organism>
<geneLocation type="chloroplast"/>
<evidence type="ECO:0000255" key="1">
    <source>
        <dbReference type="HAMAP-Rule" id="MF_01347"/>
    </source>
</evidence>
<name>ATPB_PHOTN</name>
<dbReference type="EC" id="7.1.2.2" evidence="1"/>
<dbReference type="EMBL" id="AJ417586">
    <property type="protein sequence ID" value="CAD10768.1"/>
    <property type="molecule type" value="Genomic_DNA"/>
</dbReference>
<dbReference type="SMR" id="Q95AD7"/>
<dbReference type="GO" id="GO:0009535">
    <property type="term" value="C:chloroplast thylakoid membrane"/>
    <property type="evidence" value="ECO:0007669"/>
    <property type="project" value="UniProtKB-SubCell"/>
</dbReference>
<dbReference type="GO" id="GO:0005739">
    <property type="term" value="C:mitochondrion"/>
    <property type="evidence" value="ECO:0007669"/>
    <property type="project" value="GOC"/>
</dbReference>
<dbReference type="GO" id="GO:0045259">
    <property type="term" value="C:proton-transporting ATP synthase complex"/>
    <property type="evidence" value="ECO:0007669"/>
    <property type="project" value="UniProtKB-KW"/>
</dbReference>
<dbReference type="GO" id="GO:0005524">
    <property type="term" value="F:ATP binding"/>
    <property type="evidence" value="ECO:0007669"/>
    <property type="project" value="UniProtKB-UniRule"/>
</dbReference>
<dbReference type="GO" id="GO:0016887">
    <property type="term" value="F:ATP hydrolysis activity"/>
    <property type="evidence" value="ECO:0007669"/>
    <property type="project" value="InterPro"/>
</dbReference>
<dbReference type="GO" id="GO:0046933">
    <property type="term" value="F:proton-transporting ATP synthase activity, rotational mechanism"/>
    <property type="evidence" value="ECO:0007669"/>
    <property type="project" value="UniProtKB-UniRule"/>
</dbReference>
<dbReference type="GO" id="GO:0042776">
    <property type="term" value="P:proton motive force-driven mitochondrial ATP synthesis"/>
    <property type="evidence" value="ECO:0007669"/>
    <property type="project" value="TreeGrafter"/>
</dbReference>
<dbReference type="CDD" id="cd18110">
    <property type="entry name" value="ATP-synt_F1_beta_C"/>
    <property type="match status" value="1"/>
</dbReference>
<dbReference type="CDD" id="cd18115">
    <property type="entry name" value="ATP-synt_F1_beta_N"/>
    <property type="match status" value="1"/>
</dbReference>
<dbReference type="CDD" id="cd01133">
    <property type="entry name" value="F1-ATPase_beta_CD"/>
    <property type="match status" value="1"/>
</dbReference>
<dbReference type="FunFam" id="1.10.1140.10:FF:000001">
    <property type="entry name" value="ATP synthase subunit beta"/>
    <property type="match status" value="1"/>
</dbReference>
<dbReference type="FunFam" id="3.40.50.12240:FF:000006">
    <property type="entry name" value="ATP synthase subunit beta"/>
    <property type="match status" value="1"/>
</dbReference>
<dbReference type="FunFam" id="3.40.50.300:FF:000026">
    <property type="entry name" value="ATP synthase subunit beta"/>
    <property type="match status" value="1"/>
</dbReference>
<dbReference type="FunFam" id="2.40.10.170:FF:000002">
    <property type="entry name" value="ATP synthase subunit beta, chloroplastic"/>
    <property type="match status" value="1"/>
</dbReference>
<dbReference type="Gene3D" id="2.40.10.170">
    <property type="match status" value="1"/>
</dbReference>
<dbReference type="Gene3D" id="1.10.1140.10">
    <property type="entry name" value="Bovine Mitochondrial F1-atpase, Atp Synthase Beta Chain, Chain D, domain 3"/>
    <property type="match status" value="1"/>
</dbReference>
<dbReference type="Gene3D" id="3.40.50.300">
    <property type="entry name" value="P-loop containing nucleotide triphosphate hydrolases"/>
    <property type="match status" value="1"/>
</dbReference>
<dbReference type="HAMAP" id="MF_01347">
    <property type="entry name" value="ATP_synth_beta_bact"/>
    <property type="match status" value="1"/>
</dbReference>
<dbReference type="InterPro" id="IPR003593">
    <property type="entry name" value="AAA+_ATPase"/>
</dbReference>
<dbReference type="InterPro" id="IPR055190">
    <property type="entry name" value="ATP-synt_VA_C"/>
</dbReference>
<dbReference type="InterPro" id="IPR005722">
    <property type="entry name" value="ATP_synth_F1_bsu"/>
</dbReference>
<dbReference type="InterPro" id="IPR020003">
    <property type="entry name" value="ATPase_a/bsu_AS"/>
</dbReference>
<dbReference type="InterPro" id="IPR050053">
    <property type="entry name" value="ATPase_alpha/beta_chains"/>
</dbReference>
<dbReference type="InterPro" id="IPR004100">
    <property type="entry name" value="ATPase_F1/V1/A1_a/bsu_N"/>
</dbReference>
<dbReference type="InterPro" id="IPR036121">
    <property type="entry name" value="ATPase_F1/V1/A1_a/bsu_N_sf"/>
</dbReference>
<dbReference type="InterPro" id="IPR000194">
    <property type="entry name" value="ATPase_F1/V1/A1_a/bsu_nucl-bd"/>
</dbReference>
<dbReference type="InterPro" id="IPR024034">
    <property type="entry name" value="ATPase_F1/V1_b/a_C"/>
</dbReference>
<dbReference type="InterPro" id="IPR027417">
    <property type="entry name" value="P-loop_NTPase"/>
</dbReference>
<dbReference type="NCBIfam" id="TIGR01039">
    <property type="entry name" value="atpD"/>
    <property type="match status" value="1"/>
</dbReference>
<dbReference type="PANTHER" id="PTHR15184">
    <property type="entry name" value="ATP SYNTHASE"/>
    <property type="match status" value="1"/>
</dbReference>
<dbReference type="PANTHER" id="PTHR15184:SF71">
    <property type="entry name" value="ATP SYNTHASE SUBUNIT BETA, MITOCHONDRIAL"/>
    <property type="match status" value="1"/>
</dbReference>
<dbReference type="Pfam" id="PF00006">
    <property type="entry name" value="ATP-synt_ab"/>
    <property type="match status" value="1"/>
</dbReference>
<dbReference type="Pfam" id="PF02874">
    <property type="entry name" value="ATP-synt_ab_N"/>
    <property type="match status" value="1"/>
</dbReference>
<dbReference type="Pfam" id="PF22919">
    <property type="entry name" value="ATP-synt_VA_C"/>
    <property type="match status" value="1"/>
</dbReference>
<dbReference type="SMART" id="SM00382">
    <property type="entry name" value="AAA"/>
    <property type="match status" value="1"/>
</dbReference>
<dbReference type="SUPFAM" id="SSF47917">
    <property type="entry name" value="C-terminal domain of alpha and beta subunits of F1 ATP synthase"/>
    <property type="match status" value="1"/>
</dbReference>
<dbReference type="SUPFAM" id="SSF50615">
    <property type="entry name" value="N-terminal domain of alpha and beta subunits of F1 ATP synthase"/>
    <property type="match status" value="1"/>
</dbReference>
<dbReference type="SUPFAM" id="SSF52540">
    <property type="entry name" value="P-loop containing nucleoside triphosphate hydrolases"/>
    <property type="match status" value="1"/>
</dbReference>
<dbReference type="PROSITE" id="PS00152">
    <property type="entry name" value="ATPASE_ALPHA_BETA"/>
    <property type="match status" value="1"/>
</dbReference>
<accession>Q95AD7</accession>
<sequence>MRINPTTSGSAVSTVEEKKLGRIAQIIGPVLDVVFPPGKMPNIYNALVVKGRDTASQQINVTCEVQQLLGNNRVRAVAMSATDGLTRGMEVIDTGAPLSVPVGGATLGRIFNVLGEPVDNLGPVDTRTTSPIHRSAPAFIQLDTKLSIFETGIKVVDLLAPYRRGRKIGLFGGAGVGKTVLIMELINNIAKAHGGVSVFGGVGERTREGNDLYMEMKESGVINEKNIAESKVALVYGQMNEPPGARMRVGLTALTMAEYFRDVNEQDVLLFIDNIFRFVQAGSEVSALLGRMPSAVGYQPTLSTEMGSLQERITSTKEGSITSIQAVYVPADDLTDPAPATTFAHLDATTVLSRGLAAKGIYPAVDPLDSTSTMLQPWIVGEEHYETAQRVKQTLQRYKELQDIIAILGLDELSEEDRLTVARARKIERFLSQPFFVAEVFTGSPGKYVGLAETIRGFQLILSGELDGLPEQAFYLVGNIDEVTAKAMNLEKESNLKK</sequence>
<gene>
    <name evidence="1" type="primary">atpB</name>
</gene>
<comment type="function">
    <text evidence="1">Produces ATP from ADP in the presence of a proton gradient across the membrane. The catalytic sites are hosted primarily by the beta subunits.</text>
</comment>
<comment type="catalytic activity">
    <reaction evidence="1">
        <text>ATP + H2O + 4 H(+)(in) = ADP + phosphate + 5 H(+)(out)</text>
        <dbReference type="Rhea" id="RHEA:57720"/>
        <dbReference type="ChEBI" id="CHEBI:15377"/>
        <dbReference type="ChEBI" id="CHEBI:15378"/>
        <dbReference type="ChEBI" id="CHEBI:30616"/>
        <dbReference type="ChEBI" id="CHEBI:43474"/>
        <dbReference type="ChEBI" id="CHEBI:456216"/>
        <dbReference type="EC" id="7.1.2.2"/>
    </reaction>
</comment>
<comment type="subunit">
    <text evidence="1">F-type ATPases have 2 components, CF(1) - the catalytic core - and CF(0) - the membrane proton channel. CF(1) has five subunits: alpha(3), beta(3), gamma(1), delta(1), epsilon(1). CF(0) has four main subunits: a(1), b(1), b'(1) and c(9-12).</text>
</comment>
<comment type="subcellular location">
    <subcellularLocation>
        <location evidence="1">Plastid</location>
        <location evidence="1">Chloroplast thylakoid membrane</location>
        <topology evidence="1">Peripheral membrane protein</topology>
    </subcellularLocation>
</comment>
<comment type="similarity">
    <text evidence="1">Belongs to the ATPase alpha/beta chains family.</text>
</comment>
<protein>
    <recommendedName>
        <fullName evidence="1">ATP synthase subunit beta, chloroplastic</fullName>
        <ecNumber evidence="1">7.1.2.2</ecNumber>
    </recommendedName>
    <alternativeName>
        <fullName evidence="1">ATP synthase F1 sector subunit beta</fullName>
    </alternativeName>
    <alternativeName>
        <fullName evidence="1">F-ATPase subunit beta</fullName>
    </alternativeName>
</protein>